<feature type="chain" id="PRO_0000299849" description="Putative uncharacterized protein YDL034W">
    <location>
        <begin position="1"/>
        <end position="114"/>
    </location>
</feature>
<reference key="1">
    <citation type="journal article" date="1997" name="Yeast">
        <title>The sequence of a 36.7 kb segment on the left arm of chromosome IV from Saccharomyces cerevisiae reveals 20 non-overlapping open reading frames (ORFs) including SIT4, FAD1, NAM1, RNA11, SIR2, NAT1, PRP9, ACT2 and MPS1 and 11 new ORFs.</title>
        <authorList>
            <person name="Saren A.-M."/>
            <person name="Laamanen P."/>
            <person name="Lejarcegui J.B."/>
            <person name="Paulin L."/>
        </authorList>
    </citation>
    <scope>NUCLEOTIDE SEQUENCE [GENOMIC DNA]</scope>
    <source>
        <strain>ATCC 204508 / S288c</strain>
    </source>
</reference>
<reference key="2">
    <citation type="journal article" date="1997" name="Nature">
        <title>The nucleotide sequence of Saccharomyces cerevisiae chromosome IV.</title>
        <authorList>
            <person name="Jacq C."/>
            <person name="Alt-Moerbe J."/>
            <person name="Andre B."/>
            <person name="Arnold W."/>
            <person name="Bahr A."/>
            <person name="Ballesta J.P.G."/>
            <person name="Bargues M."/>
            <person name="Baron L."/>
            <person name="Becker A."/>
            <person name="Biteau N."/>
            <person name="Bloecker H."/>
            <person name="Blugeon C."/>
            <person name="Boskovic J."/>
            <person name="Brandt P."/>
            <person name="Brueckner M."/>
            <person name="Buitrago M.J."/>
            <person name="Coster F."/>
            <person name="Delaveau T."/>
            <person name="del Rey F."/>
            <person name="Dujon B."/>
            <person name="Eide L.G."/>
            <person name="Garcia-Cantalejo J.M."/>
            <person name="Goffeau A."/>
            <person name="Gomez-Peris A."/>
            <person name="Granotier C."/>
            <person name="Hanemann V."/>
            <person name="Hankeln T."/>
            <person name="Hoheisel J.D."/>
            <person name="Jaeger W."/>
            <person name="Jimenez A."/>
            <person name="Jonniaux J.-L."/>
            <person name="Kraemer C."/>
            <person name="Kuester H."/>
            <person name="Laamanen P."/>
            <person name="Legros Y."/>
            <person name="Louis E.J."/>
            <person name="Moeller-Rieker S."/>
            <person name="Monnet A."/>
            <person name="Moro M."/>
            <person name="Mueller-Auer S."/>
            <person name="Nussbaumer B."/>
            <person name="Paricio N."/>
            <person name="Paulin L."/>
            <person name="Perea J."/>
            <person name="Perez-Alonso M."/>
            <person name="Perez-Ortin J.E."/>
            <person name="Pohl T.M."/>
            <person name="Prydz H."/>
            <person name="Purnelle B."/>
            <person name="Rasmussen S.W."/>
            <person name="Remacha M.A."/>
            <person name="Revuelta J.L."/>
            <person name="Rieger M."/>
            <person name="Salom D."/>
            <person name="Saluz H.P."/>
            <person name="Saiz J.E."/>
            <person name="Saren A.-M."/>
            <person name="Schaefer M."/>
            <person name="Scharfe M."/>
            <person name="Schmidt E.R."/>
            <person name="Schneider C."/>
            <person name="Scholler P."/>
            <person name="Schwarz S."/>
            <person name="Soler-Mira A."/>
            <person name="Urrestarazu L.A."/>
            <person name="Verhasselt P."/>
            <person name="Vissers S."/>
            <person name="Voet M."/>
            <person name="Volckaert G."/>
            <person name="Wagner G."/>
            <person name="Wambutt R."/>
            <person name="Wedler E."/>
            <person name="Wedler H."/>
            <person name="Woelfl S."/>
            <person name="Harris D.E."/>
            <person name="Bowman S."/>
            <person name="Brown D."/>
            <person name="Churcher C.M."/>
            <person name="Connor R."/>
            <person name="Dedman K."/>
            <person name="Gentles S."/>
            <person name="Hamlin N."/>
            <person name="Hunt S."/>
            <person name="Jones L."/>
            <person name="McDonald S."/>
            <person name="Murphy L.D."/>
            <person name="Niblett D."/>
            <person name="Odell C."/>
            <person name="Oliver K."/>
            <person name="Rajandream M.A."/>
            <person name="Richards C."/>
            <person name="Shore L."/>
            <person name="Walsh S.V."/>
            <person name="Barrell B.G."/>
            <person name="Dietrich F.S."/>
            <person name="Mulligan J.T."/>
            <person name="Allen E."/>
            <person name="Araujo R."/>
            <person name="Aviles E."/>
            <person name="Berno A."/>
            <person name="Carpenter J."/>
            <person name="Chen E."/>
            <person name="Cherry J.M."/>
            <person name="Chung E."/>
            <person name="Duncan M."/>
            <person name="Hunicke-Smith S."/>
            <person name="Hyman R.W."/>
            <person name="Komp C."/>
            <person name="Lashkari D."/>
            <person name="Lew H."/>
            <person name="Lin D."/>
            <person name="Mosedale D."/>
            <person name="Nakahara K."/>
            <person name="Namath A."/>
            <person name="Oefner P."/>
            <person name="Oh C."/>
            <person name="Petel F.X."/>
            <person name="Roberts D."/>
            <person name="Schramm S."/>
            <person name="Schroeder M."/>
            <person name="Shogren T."/>
            <person name="Shroff N."/>
            <person name="Winant A."/>
            <person name="Yelton M.A."/>
            <person name="Botstein D."/>
            <person name="Davis R.W."/>
            <person name="Johnston M."/>
            <person name="Andrews S."/>
            <person name="Brinkman R."/>
            <person name="Cooper J."/>
            <person name="Ding H."/>
            <person name="Du Z."/>
            <person name="Favello A."/>
            <person name="Fulton L."/>
            <person name="Gattung S."/>
            <person name="Greco T."/>
            <person name="Hallsworth K."/>
            <person name="Hawkins J."/>
            <person name="Hillier L.W."/>
            <person name="Jier M."/>
            <person name="Johnson D."/>
            <person name="Johnston L."/>
            <person name="Kirsten J."/>
            <person name="Kucaba T."/>
            <person name="Langston Y."/>
            <person name="Latreille P."/>
            <person name="Le T."/>
            <person name="Mardis E."/>
            <person name="Menezes S."/>
            <person name="Miller N."/>
            <person name="Nhan M."/>
            <person name="Pauley A."/>
            <person name="Peluso D."/>
            <person name="Rifkin L."/>
            <person name="Riles L."/>
            <person name="Taich A."/>
            <person name="Trevaskis E."/>
            <person name="Vignati D."/>
            <person name="Wilcox L."/>
            <person name="Wohldman P."/>
            <person name="Vaudin M."/>
            <person name="Wilson R."/>
            <person name="Waterston R."/>
            <person name="Albermann K."/>
            <person name="Hani J."/>
            <person name="Heumann K."/>
            <person name="Kleine K."/>
            <person name="Mewes H.-W."/>
            <person name="Zollner A."/>
            <person name="Zaccaria P."/>
        </authorList>
    </citation>
    <scope>NUCLEOTIDE SEQUENCE [LARGE SCALE GENOMIC DNA]</scope>
    <source>
        <strain>ATCC 204508 / S288c</strain>
    </source>
</reference>
<reference key="3">
    <citation type="journal article" date="2014" name="G3 (Bethesda)">
        <title>The reference genome sequence of Saccharomyces cerevisiae: Then and now.</title>
        <authorList>
            <person name="Engel S.R."/>
            <person name="Dietrich F.S."/>
            <person name="Fisk D.G."/>
            <person name="Binkley G."/>
            <person name="Balakrishnan R."/>
            <person name="Costanzo M.C."/>
            <person name="Dwight S.S."/>
            <person name="Hitz B.C."/>
            <person name="Karra K."/>
            <person name="Nash R.S."/>
            <person name="Weng S."/>
            <person name="Wong E.D."/>
            <person name="Lloyd P."/>
            <person name="Skrzypek M.S."/>
            <person name="Miyasato S.R."/>
            <person name="Simison M."/>
            <person name="Cherry J.M."/>
        </authorList>
    </citation>
    <scope>GENOME REANNOTATION</scope>
    <source>
        <strain>ATCC 204508 / S288c</strain>
    </source>
</reference>
<reference key="4">
    <citation type="journal article" date="2007" name="Genome Res.">
        <title>Approaching a complete repository of sequence-verified protein-encoding clones for Saccharomyces cerevisiae.</title>
        <authorList>
            <person name="Hu Y."/>
            <person name="Rolfs A."/>
            <person name="Bhullar B."/>
            <person name="Murthy T.V.S."/>
            <person name="Zhu C."/>
            <person name="Berger M.F."/>
            <person name="Camargo A.A."/>
            <person name="Kelley F."/>
            <person name="McCarron S."/>
            <person name="Jepson D."/>
            <person name="Richardson A."/>
            <person name="Raphael J."/>
            <person name="Moreira D."/>
            <person name="Taycher E."/>
            <person name="Zuo D."/>
            <person name="Mohr S."/>
            <person name="Kane M.F."/>
            <person name="Williamson J."/>
            <person name="Simpson A.J.G."/>
            <person name="Bulyk M.L."/>
            <person name="Harlow E."/>
            <person name="Marsischky G."/>
            <person name="Kolodner R.D."/>
            <person name="LaBaer J."/>
        </authorList>
    </citation>
    <scope>NUCLEOTIDE SEQUENCE [GENOMIC DNA]</scope>
    <source>
        <strain>ATCC 204508 / S288c</strain>
    </source>
</reference>
<accession>Q12448</accession>
<comment type="miscellaneous">
    <text evidence="1">Partially overlaps GPR1.</text>
</comment>
<comment type="caution">
    <text evidence="2">Product of a dubious gene prediction unlikely to encode a functional protein. Because of that it is not part of the S.cerevisiae S288c complete/reference proteome set.</text>
</comment>
<evidence type="ECO:0000305" key="1"/>
<evidence type="ECO:0000305" key="2">
    <source>
    </source>
</evidence>
<gene>
    <name type="ordered locus">YDL034W</name>
    <name type="ORF">D2758</name>
</gene>
<dbReference type="EMBL" id="Z71781">
    <property type="protein sequence ID" value="CAA96455.1"/>
    <property type="molecule type" value="Genomic_DNA"/>
</dbReference>
<dbReference type="EMBL" id="Z74083">
    <property type="protein sequence ID" value="CAA98594.1"/>
    <property type="molecule type" value="Genomic_DNA"/>
</dbReference>
<dbReference type="EMBL" id="AY693283">
    <property type="protein sequence ID" value="AAT93302.1"/>
    <property type="molecule type" value="Genomic_DNA"/>
</dbReference>
<dbReference type="PIR" id="S67567">
    <property type="entry name" value="S67567"/>
</dbReference>
<dbReference type="STRING" id="4932.YDL034W"/>
<dbReference type="PaxDb" id="4932-YDL034W"/>
<dbReference type="TopDownProteomics" id="Q12448"/>
<dbReference type="EnsemblFungi" id="YDL034W_mRNA">
    <property type="protein sequence ID" value="YDL034W"/>
    <property type="gene ID" value="YDL034W"/>
</dbReference>
<dbReference type="AGR" id="SGD:S000002192"/>
<dbReference type="SGD" id="S000002192">
    <property type="gene designation" value="YDL034W"/>
</dbReference>
<dbReference type="HOGENOM" id="CLU_2122996_0_0_1"/>
<organism>
    <name type="scientific">Saccharomyces cerevisiae (strain ATCC 204508 / S288c)</name>
    <name type="common">Baker's yeast</name>
    <dbReference type="NCBI Taxonomy" id="559292"/>
    <lineage>
        <taxon>Eukaryota</taxon>
        <taxon>Fungi</taxon>
        <taxon>Dikarya</taxon>
        <taxon>Ascomycota</taxon>
        <taxon>Saccharomycotina</taxon>
        <taxon>Saccharomycetes</taxon>
        <taxon>Saccharomycetales</taxon>
        <taxon>Saccharomycetaceae</taxon>
        <taxon>Saccharomyces</taxon>
    </lineage>
</organism>
<proteinExistence type="uncertain"/>
<protein>
    <recommendedName>
        <fullName>Putative uncharacterized protein YDL034W</fullName>
    </recommendedName>
</protein>
<sequence length="114" mass="12919">MRSCLKTFRLLSILERKNIPRQPAIRDTADAVIAIILNCNSCGAVNVEVIPGNPSSWLTVVVLSCRRESTLFSSKDDPFNAFKFGGNPSVIILSWRVCFIRHTSDHLFVVFFFW</sequence>
<name>YD034_YEAST</name>